<name>CBR4_MOUSE</name>
<proteinExistence type="evidence at protein level"/>
<keyword id="KW-0007">Acetylation</keyword>
<keyword id="KW-0275">Fatty acid biosynthesis</keyword>
<keyword id="KW-0276">Fatty acid metabolism</keyword>
<keyword id="KW-0444">Lipid biosynthesis</keyword>
<keyword id="KW-0443">Lipid metabolism</keyword>
<keyword id="KW-0496">Mitochondrion</keyword>
<keyword id="KW-0520">NAD</keyword>
<keyword id="KW-0521">NADP</keyword>
<keyword id="KW-0560">Oxidoreductase</keyword>
<keyword id="KW-1185">Reference proteome</keyword>
<sequence>MDKVCAVFGGSRGIGRAVAQLMAQKGYRLAIVSRNLEVAKVTAGELGGNHLAFRCDVAKEQDVQSTFQEMEKHLGPVNFLVNAAGINRDSLLVRTKTEDMISQLHTNLLGSMLTCKAAMKTMIQQGGSIVNVGSIIGLKGNVGQSAYSATKGGLVGFSRSLAKEVARKKIRVNVVAPGFIRTDMTRHLKEEHFKKNIPLGRFGETLEVAHAVVFLLESPYITGHVLIVDGGLQLTV</sequence>
<reference key="1">
    <citation type="journal article" date="2005" name="Science">
        <title>The transcriptional landscape of the mammalian genome.</title>
        <authorList>
            <person name="Carninci P."/>
            <person name="Kasukawa T."/>
            <person name="Katayama S."/>
            <person name="Gough J."/>
            <person name="Frith M.C."/>
            <person name="Maeda N."/>
            <person name="Oyama R."/>
            <person name="Ravasi T."/>
            <person name="Lenhard B."/>
            <person name="Wells C."/>
            <person name="Kodzius R."/>
            <person name="Shimokawa K."/>
            <person name="Bajic V.B."/>
            <person name="Brenner S.E."/>
            <person name="Batalov S."/>
            <person name="Forrest A.R."/>
            <person name="Zavolan M."/>
            <person name="Davis M.J."/>
            <person name="Wilming L.G."/>
            <person name="Aidinis V."/>
            <person name="Allen J.E."/>
            <person name="Ambesi-Impiombato A."/>
            <person name="Apweiler R."/>
            <person name="Aturaliya R.N."/>
            <person name="Bailey T.L."/>
            <person name="Bansal M."/>
            <person name="Baxter L."/>
            <person name="Beisel K.W."/>
            <person name="Bersano T."/>
            <person name="Bono H."/>
            <person name="Chalk A.M."/>
            <person name="Chiu K.P."/>
            <person name="Choudhary V."/>
            <person name="Christoffels A."/>
            <person name="Clutterbuck D.R."/>
            <person name="Crowe M.L."/>
            <person name="Dalla E."/>
            <person name="Dalrymple B.P."/>
            <person name="de Bono B."/>
            <person name="Della Gatta G."/>
            <person name="di Bernardo D."/>
            <person name="Down T."/>
            <person name="Engstrom P."/>
            <person name="Fagiolini M."/>
            <person name="Faulkner G."/>
            <person name="Fletcher C.F."/>
            <person name="Fukushima T."/>
            <person name="Furuno M."/>
            <person name="Futaki S."/>
            <person name="Gariboldi M."/>
            <person name="Georgii-Hemming P."/>
            <person name="Gingeras T.R."/>
            <person name="Gojobori T."/>
            <person name="Green R.E."/>
            <person name="Gustincich S."/>
            <person name="Harbers M."/>
            <person name="Hayashi Y."/>
            <person name="Hensch T.K."/>
            <person name="Hirokawa N."/>
            <person name="Hill D."/>
            <person name="Huminiecki L."/>
            <person name="Iacono M."/>
            <person name="Ikeo K."/>
            <person name="Iwama A."/>
            <person name="Ishikawa T."/>
            <person name="Jakt M."/>
            <person name="Kanapin A."/>
            <person name="Katoh M."/>
            <person name="Kawasawa Y."/>
            <person name="Kelso J."/>
            <person name="Kitamura H."/>
            <person name="Kitano H."/>
            <person name="Kollias G."/>
            <person name="Krishnan S.P."/>
            <person name="Kruger A."/>
            <person name="Kummerfeld S.K."/>
            <person name="Kurochkin I.V."/>
            <person name="Lareau L.F."/>
            <person name="Lazarevic D."/>
            <person name="Lipovich L."/>
            <person name="Liu J."/>
            <person name="Liuni S."/>
            <person name="McWilliam S."/>
            <person name="Madan Babu M."/>
            <person name="Madera M."/>
            <person name="Marchionni L."/>
            <person name="Matsuda H."/>
            <person name="Matsuzawa S."/>
            <person name="Miki H."/>
            <person name="Mignone F."/>
            <person name="Miyake S."/>
            <person name="Morris K."/>
            <person name="Mottagui-Tabar S."/>
            <person name="Mulder N."/>
            <person name="Nakano N."/>
            <person name="Nakauchi H."/>
            <person name="Ng P."/>
            <person name="Nilsson R."/>
            <person name="Nishiguchi S."/>
            <person name="Nishikawa S."/>
            <person name="Nori F."/>
            <person name="Ohara O."/>
            <person name="Okazaki Y."/>
            <person name="Orlando V."/>
            <person name="Pang K.C."/>
            <person name="Pavan W.J."/>
            <person name="Pavesi G."/>
            <person name="Pesole G."/>
            <person name="Petrovsky N."/>
            <person name="Piazza S."/>
            <person name="Reed J."/>
            <person name="Reid J.F."/>
            <person name="Ring B.Z."/>
            <person name="Ringwald M."/>
            <person name="Rost B."/>
            <person name="Ruan Y."/>
            <person name="Salzberg S.L."/>
            <person name="Sandelin A."/>
            <person name="Schneider C."/>
            <person name="Schoenbach C."/>
            <person name="Sekiguchi K."/>
            <person name="Semple C.A."/>
            <person name="Seno S."/>
            <person name="Sessa L."/>
            <person name="Sheng Y."/>
            <person name="Shibata Y."/>
            <person name="Shimada H."/>
            <person name="Shimada K."/>
            <person name="Silva D."/>
            <person name="Sinclair B."/>
            <person name="Sperling S."/>
            <person name="Stupka E."/>
            <person name="Sugiura K."/>
            <person name="Sultana R."/>
            <person name="Takenaka Y."/>
            <person name="Taki K."/>
            <person name="Tammoja K."/>
            <person name="Tan S.L."/>
            <person name="Tang S."/>
            <person name="Taylor M.S."/>
            <person name="Tegner J."/>
            <person name="Teichmann S.A."/>
            <person name="Ueda H.R."/>
            <person name="van Nimwegen E."/>
            <person name="Verardo R."/>
            <person name="Wei C.L."/>
            <person name="Yagi K."/>
            <person name="Yamanishi H."/>
            <person name="Zabarovsky E."/>
            <person name="Zhu S."/>
            <person name="Zimmer A."/>
            <person name="Hide W."/>
            <person name="Bult C."/>
            <person name="Grimmond S.M."/>
            <person name="Teasdale R.D."/>
            <person name="Liu E.T."/>
            <person name="Brusic V."/>
            <person name="Quackenbush J."/>
            <person name="Wahlestedt C."/>
            <person name="Mattick J.S."/>
            <person name="Hume D.A."/>
            <person name="Kai C."/>
            <person name="Sasaki D."/>
            <person name="Tomaru Y."/>
            <person name="Fukuda S."/>
            <person name="Kanamori-Katayama M."/>
            <person name="Suzuki M."/>
            <person name="Aoki J."/>
            <person name="Arakawa T."/>
            <person name="Iida J."/>
            <person name="Imamura K."/>
            <person name="Itoh M."/>
            <person name="Kato T."/>
            <person name="Kawaji H."/>
            <person name="Kawagashira N."/>
            <person name="Kawashima T."/>
            <person name="Kojima M."/>
            <person name="Kondo S."/>
            <person name="Konno H."/>
            <person name="Nakano K."/>
            <person name="Ninomiya N."/>
            <person name="Nishio T."/>
            <person name="Okada M."/>
            <person name="Plessy C."/>
            <person name="Shibata K."/>
            <person name="Shiraki T."/>
            <person name="Suzuki S."/>
            <person name="Tagami M."/>
            <person name="Waki K."/>
            <person name="Watahiki A."/>
            <person name="Okamura-Oho Y."/>
            <person name="Suzuki H."/>
            <person name="Kawai J."/>
            <person name="Hayashizaki Y."/>
        </authorList>
    </citation>
    <scope>NUCLEOTIDE SEQUENCE [LARGE SCALE MRNA]</scope>
    <source>
        <strain>C57BL/6J</strain>
        <tissue>Bone marrow macrophage</tissue>
        <tissue>Cerebellum</tissue>
    </source>
</reference>
<reference key="2">
    <citation type="journal article" date="2004" name="Genome Res.">
        <title>The status, quality, and expansion of the NIH full-length cDNA project: the Mammalian Gene Collection (MGC).</title>
        <authorList>
            <consortium name="The MGC Project Team"/>
        </authorList>
    </citation>
    <scope>NUCLEOTIDE SEQUENCE [LARGE SCALE MRNA]</scope>
    <source>
        <strain>129</strain>
        <tissue>Mammary tumor</tissue>
    </source>
</reference>
<reference key="3">
    <citation type="journal article" date="2010" name="Cell">
        <title>A tissue-specific atlas of mouse protein phosphorylation and expression.</title>
        <authorList>
            <person name="Huttlin E.L."/>
            <person name="Jedrychowski M.P."/>
            <person name="Elias J.E."/>
            <person name="Goswami T."/>
            <person name="Rad R."/>
            <person name="Beausoleil S.A."/>
            <person name="Villen J."/>
            <person name="Haas W."/>
            <person name="Sowa M.E."/>
            <person name="Gygi S.P."/>
        </authorList>
    </citation>
    <scope>IDENTIFICATION BY MASS SPECTROMETRY [LARGE SCALE ANALYSIS]</scope>
    <source>
        <tissue>Brain</tissue>
        <tissue>Brown adipose tissue</tissue>
        <tissue>Heart</tissue>
        <tissue>Kidney</tissue>
        <tissue>Liver</tissue>
        <tissue>Lung</tissue>
        <tissue>Pancreas</tissue>
        <tissue>Spleen</tissue>
        <tissue>Testis</tissue>
    </source>
</reference>
<reference key="4">
    <citation type="journal article" date="2013" name="Proc. Natl. Acad. Sci. U.S.A.">
        <title>Label-free quantitative proteomics of the lysine acetylome in mitochondria identifies substrates of SIRT3 in metabolic pathways.</title>
        <authorList>
            <person name="Rardin M.J."/>
            <person name="Newman J.C."/>
            <person name="Held J.M."/>
            <person name="Cusack M.P."/>
            <person name="Sorensen D.J."/>
            <person name="Li B."/>
            <person name="Schilling B."/>
            <person name="Mooney S.D."/>
            <person name="Kahn C.R."/>
            <person name="Verdin E."/>
            <person name="Gibson B.W."/>
        </authorList>
    </citation>
    <scope>ACETYLATION [LARGE SCALE ANALYSIS] AT LYS-40; LYS-96 AND LYS-194</scope>
    <scope>IDENTIFICATION BY MASS SPECTROMETRY [LARGE SCALE ANALYSIS]</scope>
    <source>
        <tissue>Liver</tissue>
    </source>
</reference>
<comment type="function">
    <text evidence="1">Component of the heterotetramer complex KAR (3-ketoacyl-[acyl carrier protein] reductase or 3-ketoacyl-[ACP] reductase) that forms part of the mitochondrial fatty acid synthase (mtFAS). Beta-subunit of the KAR heterotetramer complex, responsible for the 3-ketoacyl-ACP reductase activity of the mtFAS, reduces 3-oxoacyl-[ACP] to (3R)-hydroxyacyl-[ACP] in a NADPH-dependent manner with no chain length preference, thereby participating in mitochondrial fatty acid biosynthesis. The homotetramer has NADPH-dependent quinone reductase activity (in vitro), hence could play a role in protection against cytotoxicity of exogenous quinones. As a heterotetramer, it can also reduce 9,10-phenanthrenequinone, 1,4-benzoquinone and various other o-quinones and p-quinones (in vitro).</text>
</comment>
<comment type="catalytic activity">
    <reaction evidence="1">
        <text>a (3R)-hydroxyacyl-[ACP] + NADP(+) = a 3-oxoacyl-[ACP] + NADPH + H(+)</text>
        <dbReference type="Rhea" id="RHEA:17397"/>
        <dbReference type="Rhea" id="RHEA-COMP:9916"/>
        <dbReference type="Rhea" id="RHEA-COMP:9945"/>
        <dbReference type="ChEBI" id="CHEBI:15378"/>
        <dbReference type="ChEBI" id="CHEBI:57783"/>
        <dbReference type="ChEBI" id="CHEBI:58349"/>
        <dbReference type="ChEBI" id="CHEBI:78776"/>
        <dbReference type="ChEBI" id="CHEBI:78827"/>
        <dbReference type="EC" id="1.1.1.100"/>
    </reaction>
    <physiologicalReaction direction="right-to-left" evidence="1">
        <dbReference type="Rhea" id="RHEA:17399"/>
    </physiologicalReaction>
</comment>
<comment type="catalytic activity">
    <reaction evidence="1">
        <text>a quinone + NADPH + H(+) = a quinol + NADP(+)</text>
        <dbReference type="Rhea" id="RHEA:46164"/>
        <dbReference type="ChEBI" id="CHEBI:15378"/>
        <dbReference type="ChEBI" id="CHEBI:24646"/>
        <dbReference type="ChEBI" id="CHEBI:57783"/>
        <dbReference type="ChEBI" id="CHEBI:58349"/>
        <dbReference type="ChEBI" id="CHEBI:132124"/>
        <dbReference type="EC" id="1.6.5.10"/>
    </reaction>
    <physiologicalReaction direction="left-to-right" evidence="1">
        <dbReference type="Rhea" id="RHEA:46165"/>
    </physiologicalReaction>
</comment>
<comment type="pathway">
    <text evidence="1">Lipid metabolism; fatty acid biosynthesis.</text>
</comment>
<comment type="subunit">
    <text evidence="1">Homotetramer (in vitro). Heterotetramer with HSD17B8; contains two molecules each of HSD17B8 and CBR4. Does not form homotetramers when HSD17B8 is coexpressed, only heterotetramers (in vitro).</text>
</comment>
<comment type="subcellular location">
    <subcellularLocation>
        <location evidence="1">Mitochondrion matrix</location>
    </subcellularLocation>
</comment>
<comment type="similarity">
    <text evidence="3">Belongs to the short-chain dehydrogenases/reductases (SDR) family.</text>
</comment>
<comment type="sequence caution" evidence="3">
    <conflict type="erroneous initiation">
        <sequence resource="EMBL-CDS" id="BAC31519"/>
    </conflict>
</comment>
<gene>
    <name type="primary">Cbr4</name>
</gene>
<dbReference type="EC" id="1.1.1.100" evidence="1"/>
<dbReference type="EC" id="1.6.5.10" evidence="1"/>
<dbReference type="EMBL" id="AK043313">
    <property type="protein sequence ID" value="BAC31519.1"/>
    <property type="status" value="ALT_INIT"/>
    <property type="molecule type" value="mRNA"/>
</dbReference>
<dbReference type="EMBL" id="AK150763">
    <property type="protein sequence ID" value="BAE29830.1"/>
    <property type="molecule type" value="mRNA"/>
</dbReference>
<dbReference type="EMBL" id="BC009118">
    <property type="protein sequence ID" value="AAH09118.1"/>
    <property type="molecule type" value="mRNA"/>
</dbReference>
<dbReference type="CCDS" id="CCDS40349.1"/>
<dbReference type="RefSeq" id="NP_663570.2">
    <property type="nucleotide sequence ID" value="NM_145595.2"/>
</dbReference>
<dbReference type="SMR" id="Q91VT4"/>
<dbReference type="BioGRID" id="231509">
    <property type="interactions" value="8"/>
</dbReference>
<dbReference type="FunCoup" id="Q91VT4">
    <property type="interactions" value="1571"/>
</dbReference>
<dbReference type="STRING" id="10090.ENSMUSP00000034058"/>
<dbReference type="GlyGen" id="Q91VT4">
    <property type="glycosylation" value="1 site, 1 O-linked glycan (1 site)"/>
</dbReference>
<dbReference type="iPTMnet" id="Q91VT4"/>
<dbReference type="PhosphoSitePlus" id="Q91VT4"/>
<dbReference type="SwissPalm" id="Q91VT4"/>
<dbReference type="jPOST" id="Q91VT4"/>
<dbReference type="PaxDb" id="10090-ENSMUSP00000034058"/>
<dbReference type="PeptideAtlas" id="Q91VT4"/>
<dbReference type="ProteomicsDB" id="265568"/>
<dbReference type="Pumba" id="Q91VT4"/>
<dbReference type="Antibodypedia" id="28439">
    <property type="antibodies" value="179 antibodies from 24 providers"/>
</dbReference>
<dbReference type="DNASU" id="234309"/>
<dbReference type="Ensembl" id="ENSMUST00000034058.14">
    <property type="protein sequence ID" value="ENSMUSP00000034058.7"/>
    <property type="gene ID" value="ENSMUSG00000031641.15"/>
</dbReference>
<dbReference type="GeneID" id="234309"/>
<dbReference type="KEGG" id="mmu:234309"/>
<dbReference type="UCSC" id="uc009lub.2">
    <property type="organism name" value="mouse"/>
</dbReference>
<dbReference type="AGR" id="MGI:2384567"/>
<dbReference type="CTD" id="84869"/>
<dbReference type="MGI" id="MGI:2384567">
    <property type="gene designation" value="Cbr4"/>
</dbReference>
<dbReference type="VEuPathDB" id="HostDB:ENSMUSG00000031641"/>
<dbReference type="eggNOG" id="KOG1200">
    <property type="taxonomic scope" value="Eukaryota"/>
</dbReference>
<dbReference type="GeneTree" id="ENSGT00940000157620"/>
<dbReference type="HOGENOM" id="CLU_010194_1_3_1"/>
<dbReference type="InParanoid" id="Q91VT4"/>
<dbReference type="OMA" id="CQKHMVD"/>
<dbReference type="OrthoDB" id="294295at2759"/>
<dbReference type="PhylomeDB" id="Q91VT4"/>
<dbReference type="TreeFam" id="TF354265"/>
<dbReference type="Reactome" id="R-MMU-75105">
    <property type="pathway name" value="Fatty acyl-CoA biosynthesis"/>
</dbReference>
<dbReference type="UniPathway" id="UPA00094"/>
<dbReference type="BioGRID-ORCS" id="234309">
    <property type="hits" value="5 hits in 79 CRISPR screens"/>
</dbReference>
<dbReference type="ChiTaRS" id="Cbr4">
    <property type="organism name" value="mouse"/>
</dbReference>
<dbReference type="PRO" id="PR:Q91VT4"/>
<dbReference type="Proteomes" id="UP000000589">
    <property type="component" value="Chromosome 8"/>
</dbReference>
<dbReference type="RNAct" id="Q91VT4">
    <property type="molecule type" value="protein"/>
</dbReference>
<dbReference type="Bgee" id="ENSMUSG00000031641">
    <property type="expression patterns" value="Expressed in interventricular septum and 252 other cell types or tissues"/>
</dbReference>
<dbReference type="ExpressionAtlas" id="Q91VT4">
    <property type="expression patterns" value="baseline and differential"/>
</dbReference>
<dbReference type="GO" id="GO:0005759">
    <property type="term" value="C:mitochondrial matrix"/>
    <property type="evidence" value="ECO:0000250"/>
    <property type="project" value="UniProtKB"/>
</dbReference>
<dbReference type="GO" id="GO:0005739">
    <property type="term" value="C:mitochondrion"/>
    <property type="evidence" value="ECO:0007005"/>
    <property type="project" value="MGI"/>
</dbReference>
<dbReference type="GO" id="GO:1990204">
    <property type="term" value="C:oxidoreductase complex"/>
    <property type="evidence" value="ECO:0000250"/>
    <property type="project" value="UniProtKB"/>
</dbReference>
<dbReference type="GO" id="GO:0004316">
    <property type="term" value="F:3-oxoacyl-[acyl-carrier-protein] reductase (NADPH) activity"/>
    <property type="evidence" value="ECO:0000250"/>
    <property type="project" value="UniProtKB"/>
</dbReference>
<dbReference type="GO" id="GO:0070402">
    <property type="term" value="F:NADPH binding"/>
    <property type="evidence" value="ECO:0000250"/>
    <property type="project" value="UniProtKB"/>
</dbReference>
<dbReference type="GO" id="GO:0008753">
    <property type="term" value="F:NADPH dehydrogenase (quinone) activity"/>
    <property type="evidence" value="ECO:0000250"/>
    <property type="project" value="UniProtKB"/>
</dbReference>
<dbReference type="GO" id="GO:0048038">
    <property type="term" value="F:quinone binding"/>
    <property type="evidence" value="ECO:0000250"/>
    <property type="project" value="UniProtKB"/>
</dbReference>
<dbReference type="GO" id="GO:0044597">
    <property type="term" value="P:daunorubicin metabolic process"/>
    <property type="evidence" value="ECO:0007669"/>
    <property type="project" value="Ensembl"/>
</dbReference>
<dbReference type="GO" id="GO:0044598">
    <property type="term" value="P:doxorubicin metabolic process"/>
    <property type="evidence" value="ECO:0007669"/>
    <property type="project" value="Ensembl"/>
</dbReference>
<dbReference type="GO" id="GO:0006633">
    <property type="term" value="P:fatty acid biosynthetic process"/>
    <property type="evidence" value="ECO:0000250"/>
    <property type="project" value="UniProtKB"/>
</dbReference>
<dbReference type="GO" id="GO:0051290">
    <property type="term" value="P:protein heterotetramerization"/>
    <property type="evidence" value="ECO:0000250"/>
    <property type="project" value="UniProtKB"/>
</dbReference>
<dbReference type="GO" id="GO:0051289">
    <property type="term" value="P:protein homotetramerization"/>
    <property type="evidence" value="ECO:0007669"/>
    <property type="project" value="Ensembl"/>
</dbReference>
<dbReference type="FunFam" id="3.40.50.720:FF:000285">
    <property type="entry name" value="Carbonyl reductase family member 4"/>
    <property type="match status" value="1"/>
</dbReference>
<dbReference type="Gene3D" id="3.40.50.720">
    <property type="entry name" value="NAD(P)-binding Rossmann-like Domain"/>
    <property type="match status" value="1"/>
</dbReference>
<dbReference type="InterPro" id="IPR036291">
    <property type="entry name" value="NAD(P)-bd_dom_sf"/>
</dbReference>
<dbReference type="InterPro" id="IPR020904">
    <property type="entry name" value="Sc_DH/Rdtase_CS"/>
</dbReference>
<dbReference type="InterPro" id="IPR002347">
    <property type="entry name" value="SDR_fam"/>
</dbReference>
<dbReference type="PANTHER" id="PTHR42760:SF133">
    <property type="entry name" value="3-OXOACYL-[ACYL-CARRIER-PROTEIN] REDUCTASE"/>
    <property type="match status" value="1"/>
</dbReference>
<dbReference type="PANTHER" id="PTHR42760">
    <property type="entry name" value="SHORT-CHAIN DEHYDROGENASES/REDUCTASES FAMILY MEMBER"/>
    <property type="match status" value="1"/>
</dbReference>
<dbReference type="Pfam" id="PF13561">
    <property type="entry name" value="adh_short_C2"/>
    <property type="match status" value="1"/>
</dbReference>
<dbReference type="PRINTS" id="PR00081">
    <property type="entry name" value="GDHRDH"/>
</dbReference>
<dbReference type="PRINTS" id="PR00080">
    <property type="entry name" value="SDRFAMILY"/>
</dbReference>
<dbReference type="SMART" id="SM00822">
    <property type="entry name" value="PKS_KR"/>
    <property type="match status" value="1"/>
</dbReference>
<dbReference type="SUPFAM" id="SSF51735">
    <property type="entry name" value="NAD(P)-binding Rossmann-fold domains"/>
    <property type="match status" value="1"/>
</dbReference>
<dbReference type="PROSITE" id="PS00061">
    <property type="entry name" value="ADH_SHORT"/>
    <property type="match status" value="1"/>
</dbReference>
<feature type="chain" id="PRO_0000319879" description="3-oxoacyl-[acyl-carrier-protein] reductase">
    <location>
        <begin position="1"/>
        <end position="236"/>
    </location>
</feature>
<feature type="active site" description="Proton acceptor" evidence="2">
    <location>
        <position position="147"/>
    </location>
</feature>
<feature type="binding site" evidence="1">
    <location>
        <begin position="11"/>
        <end position="14"/>
    </location>
    <ligand>
        <name>NADP(+)</name>
        <dbReference type="ChEBI" id="CHEBI:58349"/>
    </ligand>
</feature>
<feature type="binding site" evidence="1">
    <location>
        <begin position="34"/>
        <end position="35"/>
    </location>
    <ligand>
        <name>NADP(+)</name>
        <dbReference type="ChEBI" id="CHEBI:58349"/>
    </ligand>
</feature>
<feature type="binding site" evidence="1">
    <location>
        <position position="56"/>
    </location>
    <ligand>
        <name>NADP(+)</name>
        <dbReference type="ChEBI" id="CHEBI:58349"/>
    </ligand>
</feature>
<feature type="binding site" evidence="1">
    <location>
        <begin position="83"/>
        <end position="85"/>
    </location>
    <ligand>
        <name>NADP(+)</name>
        <dbReference type="ChEBI" id="CHEBI:58349"/>
    </ligand>
</feature>
<feature type="binding site" evidence="1">
    <location>
        <position position="134"/>
    </location>
    <ligand>
        <name>substrate</name>
    </ligand>
</feature>
<feature type="binding site" evidence="1">
    <location>
        <position position="147"/>
    </location>
    <ligand>
        <name>NADP(+)</name>
        <dbReference type="ChEBI" id="CHEBI:58349"/>
    </ligand>
</feature>
<feature type="binding site" evidence="1">
    <location>
        <position position="151"/>
    </location>
    <ligand>
        <name>NADP(+)</name>
        <dbReference type="ChEBI" id="CHEBI:58349"/>
    </ligand>
</feature>
<feature type="binding site" evidence="1">
    <location>
        <begin position="180"/>
        <end position="182"/>
    </location>
    <ligand>
        <name>NADP(+)</name>
        <dbReference type="ChEBI" id="CHEBI:58349"/>
    </ligand>
</feature>
<feature type="site" description="Important for interaction with acyl carrier protein (ACP)" evidence="1">
    <location>
        <position position="168"/>
    </location>
</feature>
<feature type="modified residue" description="N-acetylmethionine" evidence="1">
    <location>
        <position position="1"/>
    </location>
</feature>
<feature type="modified residue" description="N6-acetyllysine" evidence="4">
    <location>
        <position position="40"/>
    </location>
</feature>
<feature type="modified residue" description="N6-acetyllysine" evidence="4">
    <location>
        <position position="96"/>
    </location>
</feature>
<feature type="modified residue" description="N6-acetyllysine" evidence="4">
    <location>
        <position position="194"/>
    </location>
</feature>
<feature type="sequence conflict" description="In Ref. 2; AAH09118." evidence="3" ref="2">
    <original>D</original>
    <variation>G</variation>
    <location>
        <position position="89"/>
    </location>
</feature>
<accession>Q91VT4</accession>
<accession>Q3UBY4</accession>
<accession>Q8BXV1</accession>
<evidence type="ECO:0000250" key="1">
    <source>
        <dbReference type="UniProtKB" id="Q8N4T8"/>
    </source>
</evidence>
<evidence type="ECO:0000255" key="2">
    <source>
        <dbReference type="PROSITE-ProRule" id="PRU10001"/>
    </source>
</evidence>
<evidence type="ECO:0000305" key="3"/>
<evidence type="ECO:0007744" key="4">
    <source>
    </source>
</evidence>
<protein>
    <recommendedName>
        <fullName>3-oxoacyl-[acyl-carrier-protein] reductase</fullName>
        <ecNumber evidence="1">1.1.1.100</ecNumber>
    </recommendedName>
    <alternativeName>
        <fullName evidence="1">3-ketoacyl-[acyl-carrier-protein] reductase beta subunit</fullName>
        <shortName evidence="1">KAR beta subunit</shortName>
    </alternativeName>
    <alternativeName>
        <fullName>Carbonyl reductase family member 4</fullName>
        <shortName>CBR4</shortName>
    </alternativeName>
    <alternativeName>
        <fullName>Quinone reductase CBR4</fullName>
        <ecNumber evidence="1">1.6.5.10</ecNumber>
    </alternativeName>
</protein>
<organism>
    <name type="scientific">Mus musculus</name>
    <name type="common">Mouse</name>
    <dbReference type="NCBI Taxonomy" id="10090"/>
    <lineage>
        <taxon>Eukaryota</taxon>
        <taxon>Metazoa</taxon>
        <taxon>Chordata</taxon>
        <taxon>Craniata</taxon>
        <taxon>Vertebrata</taxon>
        <taxon>Euteleostomi</taxon>
        <taxon>Mammalia</taxon>
        <taxon>Eutheria</taxon>
        <taxon>Euarchontoglires</taxon>
        <taxon>Glires</taxon>
        <taxon>Rodentia</taxon>
        <taxon>Myomorpha</taxon>
        <taxon>Muroidea</taxon>
        <taxon>Muridae</taxon>
        <taxon>Murinae</taxon>
        <taxon>Mus</taxon>
        <taxon>Mus</taxon>
    </lineage>
</organism>